<evidence type="ECO:0000250" key="1">
    <source>
        <dbReference type="UniProtKB" id="Q13585"/>
    </source>
</evidence>
<evidence type="ECO:0000255" key="2"/>
<evidence type="ECO:0000255" key="3">
    <source>
        <dbReference type="PROSITE-ProRule" id="PRU00521"/>
    </source>
</evidence>
<evidence type="ECO:0000256" key="4">
    <source>
        <dbReference type="SAM" id="MobiDB-lite"/>
    </source>
</evidence>
<evidence type="ECO:0000269" key="5">
    <source>
    </source>
</evidence>
<evidence type="ECO:0000269" key="6">
    <source>
    </source>
</evidence>
<evidence type="ECO:0000269" key="7">
    <source>
    </source>
</evidence>
<evidence type="ECO:0000269" key="8">
    <source>
    </source>
</evidence>
<evidence type="ECO:0000269" key="9">
    <source>
    </source>
</evidence>
<evidence type="ECO:0000305" key="10"/>
<accession>O88495</accession>
<accession>Q3V1S8</accession>
<proteinExistence type="evidence at protein level"/>
<name>MTR1L_MOUSE</name>
<reference key="1">
    <citation type="journal article" date="1999" name="Genomics">
        <title>Assignment of the melatonin-related receptor to human chromosome X (GPR50) and mouse chromosome X (Gpr50).</title>
        <authorList>
            <person name="Gubitz A.K."/>
            <person name="Reppert S.M."/>
        </authorList>
    </citation>
    <scope>NUCLEOTIDE SEQUENCE [MRNA]</scope>
</reference>
<reference key="2">
    <citation type="journal article" date="2005" name="Science">
        <title>The transcriptional landscape of the mammalian genome.</title>
        <authorList>
            <person name="Carninci P."/>
            <person name="Kasukawa T."/>
            <person name="Katayama S."/>
            <person name="Gough J."/>
            <person name="Frith M.C."/>
            <person name="Maeda N."/>
            <person name="Oyama R."/>
            <person name="Ravasi T."/>
            <person name="Lenhard B."/>
            <person name="Wells C."/>
            <person name="Kodzius R."/>
            <person name="Shimokawa K."/>
            <person name="Bajic V.B."/>
            <person name="Brenner S.E."/>
            <person name="Batalov S."/>
            <person name="Forrest A.R."/>
            <person name="Zavolan M."/>
            <person name="Davis M.J."/>
            <person name="Wilming L.G."/>
            <person name="Aidinis V."/>
            <person name="Allen J.E."/>
            <person name="Ambesi-Impiombato A."/>
            <person name="Apweiler R."/>
            <person name="Aturaliya R.N."/>
            <person name="Bailey T.L."/>
            <person name="Bansal M."/>
            <person name="Baxter L."/>
            <person name="Beisel K.W."/>
            <person name="Bersano T."/>
            <person name="Bono H."/>
            <person name="Chalk A.M."/>
            <person name="Chiu K.P."/>
            <person name="Choudhary V."/>
            <person name="Christoffels A."/>
            <person name="Clutterbuck D.R."/>
            <person name="Crowe M.L."/>
            <person name="Dalla E."/>
            <person name="Dalrymple B.P."/>
            <person name="de Bono B."/>
            <person name="Della Gatta G."/>
            <person name="di Bernardo D."/>
            <person name="Down T."/>
            <person name="Engstrom P."/>
            <person name="Fagiolini M."/>
            <person name="Faulkner G."/>
            <person name="Fletcher C.F."/>
            <person name="Fukushima T."/>
            <person name="Furuno M."/>
            <person name="Futaki S."/>
            <person name="Gariboldi M."/>
            <person name="Georgii-Hemming P."/>
            <person name="Gingeras T.R."/>
            <person name="Gojobori T."/>
            <person name="Green R.E."/>
            <person name="Gustincich S."/>
            <person name="Harbers M."/>
            <person name="Hayashi Y."/>
            <person name="Hensch T.K."/>
            <person name="Hirokawa N."/>
            <person name="Hill D."/>
            <person name="Huminiecki L."/>
            <person name="Iacono M."/>
            <person name="Ikeo K."/>
            <person name="Iwama A."/>
            <person name="Ishikawa T."/>
            <person name="Jakt M."/>
            <person name="Kanapin A."/>
            <person name="Katoh M."/>
            <person name="Kawasawa Y."/>
            <person name="Kelso J."/>
            <person name="Kitamura H."/>
            <person name="Kitano H."/>
            <person name="Kollias G."/>
            <person name="Krishnan S.P."/>
            <person name="Kruger A."/>
            <person name="Kummerfeld S.K."/>
            <person name="Kurochkin I.V."/>
            <person name="Lareau L.F."/>
            <person name="Lazarevic D."/>
            <person name="Lipovich L."/>
            <person name="Liu J."/>
            <person name="Liuni S."/>
            <person name="McWilliam S."/>
            <person name="Madan Babu M."/>
            <person name="Madera M."/>
            <person name="Marchionni L."/>
            <person name="Matsuda H."/>
            <person name="Matsuzawa S."/>
            <person name="Miki H."/>
            <person name="Mignone F."/>
            <person name="Miyake S."/>
            <person name="Morris K."/>
            <person name="Mottagui-Tabar S."/>
            <person name="Mulder N."/>
            <person name="Nakano N."/>
            <person name="Nakauchi H."/>
            <person name="Ng P."/>
            <person name="Nilsson R."/>
            <person name="Nishiguchi S."/>
            <person name="Nishikawa S."/>
            <person name="Nori F."/>
            <person name="Ohara O."/>
            <person name="Okazaki Y."/>
            <person name="Orlando V."/>
            <person name="Pang K.C."/>
            <person name="Pavan W.J."/>
            <person name="Pavesi G."/>
            <person name="Pesole G."/>
            <person name="Petrovsky N."/>
            <person name="Piazza S."/>
            <person name="Reed J."/>
            <person name="Reid J.F."/>
            <person name="Ring B.Z."/>
            <person name="Ringwald M."/>
            <person name="Rost B."/>
            <person name="Ruan Y."/>
            <person name="Salzberg S.L."/>
            <person name="Sandelin A."/>
            <person name="Schneider C."/>
            <person name="Schoenbach C."/>
            <person name="Sekiguchi K."/>
            <person name="Semple C.A."/>
            <person name="Seno S."/>
            <person name="Sessa L."/>
            <person name="Sheng Y."/>
            <person name="Shibata Y."/>
            <person name="Shimada H."/>
            <person name="Shimada K."/>
            <person name="Silva D."/>
            <person name="Sinclair B."/>
            <person name="Sperling S."/>
            <person name="Stupka E."/>
            <person name="Sugiura K."/>
            <person name="Sultana R."/>
            <person name="Takenaka Y."/>
            <person name="Taki K."/>
            <person name="Tammoja K."/>
            <person name="Tan S.L."/>
            <person name="Tang S."/>
            <person name="Taylor M.S."/>
            <person name="Tegner J."/>
            <person name="Teichmann S.A."/>
            <person name="Ueda H.R."/>
            <person name="van Nimwegen E."/>
            <person name="Verardo R."/>
            <person name="Wei C.L."/>
            <person name="Yagi K."/>
            <person name="Yamanishi H."/>
            <person name="Zabarovsky E."/>
            <person name="Zhu S."/>
            <person name="Zimmer A."/>
            <person name="Hide W."/>
            <person name="Bult C."/>
            <person name="Grimmond S.M."/>
            <person name="Teasdale R.D."/>
            <person name="Liu E.T."/>
            <person name="Brusic V."/>
            <person name="Quackenbush J."/>
            <person name="Wahlestedt C."/>
            <person name="Mattick J.S."/>
            <person name="Hume D.A."/>
            <person name="Kai C."/>
            <person name="Sasaki D."/>
            <person name="Tomaru Y."/>
            <person name="Fukuda S."/>
            <person name="Kanamori-Katayama M."/>
            <person name="Suzuki M."/>
            <person name="Aoki J."/>
            <person name="Arakawa T."/>
            <person name="Iida J."/>
            <person name="Imamura K."/>
            <person name="Itoh M."/>
            <person name="Kato T."/>
            <person name="Kawaji H."/>
            <person name="Kawagashira N."/>
            <person name="Kawashima T."/>
            <person name="Kojima M."/>
            <person name="Kondo S."/>
            <person name="Konno H."/>
            <person name="Nakano K."/>
            <person name="Ninomiya N."/>
            <person name="Nishio T."/>
            <person name="Okada M."/>
            <person name="Plessy C."/>
            <person name="Shibata K."/>
            <person name="Shiraki T."/>
            <person name="Suzuki S."/>
            <person name="Tagami M."/>
            <person name="Waki K."/>
            <person name="Watahiki A."/>
            <person name="Okamura-Oho Y."/>
            <person name="Suzuki H."/>
            <person name="Kawai J."/>
            <person name="Hayashizaki Y."/>
        </authorList>
    </citation>
    <scope>NUCLEOTIDE SEQUENCE [LARGE SCALE MRNA]</scope>
    <source>
        <strain>C57BL/6J</strain>
        <tissue>Extraembryonic tissue</tissue>
        <tissue>Placenta</tissue>
    </source>
</reference>
<reference key="3">
    <citation type="journal article" date="2009" name="PLoS Biol.">
        <title>Lineage-specific biology revealed by a finished genome assembly of the mouse.</title>
        <authorList>
            <person name="Church D.M."/>
            <person name="Goodstadt L."/>
            <person name="Hillier L.W."/>
            <person name="Zody M.C."/>
            <person name="Goldstein S."/>
            <person name="She X."/>
            <person name="Bult C.J."/>
            <person name="Agarwala R."/>
            <person name="Cherry J.L."/>
            <person name="DiCuccio M."/>
            <person name="Hlavina W."/>
            <person name="Kapustin Y."/>
            <person name="Meric P."/>
            <person name="Maglott D."/>
            <person name="Birtle Z."/>
            <person name="Marques A.C."/>
            <person name="Graves T."/>
            <person name="Zhou S."/>
            <person name="Teague B."/>
            <person name="Potamousis K."/>
            <person name="Churas C."/>
            <person name="Place M."/>
            <person name="Herschleb J."/>
            <person name="Runnheim R."/>
            <person name="Forrest D."/>
            <person name="Amos-Landgraf J."/>
            <person name="Schwartz D.C."/>
            <person name="Cheng Z."/>
            <person name="Lindblad-Toh K."/>
            <person name="Eichler E.E."/>
            <person name="Ponting C.P."/>
        </authorList>
    </citation>
    <scope>NUCLEOTIDE SEQUENCE [LARGE SCALE GENOMIC DNA]</scope>
    <source>
        <strain>C57BL/6J</strain>
    </source>
</reference>
<reference key="4">
    <citation type="submission" date="2005-07" db="EMBL/GenBank/DDBJ databases">
        <authorList>
            <person name="Mural R.J."/>
            <person name="Adams M.D."/>
            <person name="Myers E.W."/>
            <person name="Smith H.O."/>
            <person name="Venter J.C."/>
        </authorList>
    </citation>
    <scope>NUCLEOTIDE SEQUENCE [LARGE SCALE GENOMIC DNA]</scope>
</reference>
<reference key="5">
    <citation type="journal article" date="2004" name="Genome Res.">
        <title>The status, quality, and expansion of the NIH full-length cDNA project: the Mammalian Gene Collection (MGC).</title>
        <authorList>
            <consortium name="The MGC Project Team"/>
        </authorList>
    </citation>
    <scope>NUCLEOTIDE SEQUENCE [LARGE SCALE MRNA]</scope>
    <source>
        <tissue>Brain</tissue>
    </source>
</reference>
<reference key="6">
    <citation type="journal article" date="2008" name="Am. J. Physiol.">
        <title>Altered metabolism in the melatonin-related receptor (GPR50) knockout mouse.</title>
        <authorList>
            <person name="Ivanova E.A."/>
            <person name="Bechtold D.A."/>
            <person name="Dupre S.M."/>
            <person name="Brennand J."/>
            <person name="Barrett P."/>
            <person name="Luckman S.M."/>
            <person name="Loudon A.S."/>
        </authorList>
    </citation>
    <scope>FUNCTION</scope>
    <scope>DISRUPTION PHENOTYPE</scope>
    <scope>TISSUE SPECIFICITY</scope>
    <scope>INDUCTION</scope>
</reference>
<reference key="7">
    <citation type="journal article" date="2009" name="Mol. Cell. Neurosci.">
        <title>GPR50 interacts with neuronal NOGO-A and affects neurite outgrowth.</title>
        <authorList>
            <person name="Gruenewald E."/>
            <person name="Kinnell H.L."/>
            <person name="Porteous D.J."/>
            <person name="Thomson P.A."/>
        </authorList>
    </citation>
    <scope>FUNCTION</scope>
    <scope>SUBCELLULAR LOCATION</scope>
    <scope>TISSUE SPECIFICITY</scope>
</reference>
<reference key="8">
    <citation type="journal article" date="2011" name="PLoS ONE">
        <title>GPR50 interacts with TIP60 to modulate glucocorticoid receptor signalling.</title>
        <authorList>
            <person name="Li J."/>
            <person name="Hand L.E."/>
            <person name="Meng Q.J."/>
            <person name="Loudon A.S."/>
            <person name="Bechtold D.A."/>
        </authorList>
    </citation>
    <scope>FUNCTION</scope>
    <scope>INTERACTION WITH KAT5</scope>
    <scope>SUBCELLULAR LOCATION</scope>
    <scope>DISRUPTION PHENOTYPE</scope>
</reference>
<reference key="9">
    <citation type="journal article" date="2015" name="Biochem. Biophys. Res. Commun.">
        <title>G protein coupled receptor 50 promotes self-renewal and neuronal differentiation of embryonic neural progenitor cells through regulation of notch and wnt/beta-catenin signalings.</title>
        <authorList>
            <person name="Ma Y.X."/>
            <person name="Wu Z.Q."/>
            <person name="Feng Y.J."/>
            <person name="Xiao Z.C."/>
            <person name="Qin X.L."/>
            <person name="Ma Q.H."/>
        </authorList>
    </citation>
    <scope>FUNCTION</scope>
</reference>
<reference key="10">
    <citation type="journal article" date="2018" name="Nat. Commun.">
        <title>The orphan GPR50 receptor promotes constitutive TGFbeta receptor signaling and protects against cancer development.</title>
        <authorList>
            <person name="Wojciech S."/>
            <person name="Ahmad R."/>
            <person name="Belaid-Choucair Z."/>
            <person name="Journe A.S."/>
            <person name="Gallet S."/>
            <person name="Dam J."/>
            <person name="Daulat A."/>
            <person name="Ndiaye-Lobry D."/>
            <person name="Lahuna O."/>
            <person name="Karamitri A."/>
            <person name="Guillaume J.L."/>
            <person name="Do Cruzeiro M."/>
            <person name="Guillonneau F."/>
            <person name="Saade A."/>
            <person name="Clement N."/>
            <person name="Courivaud T."/>
            <person name="Kaabi N."/>
            <person name="Tadagaki K."/>
            <person name="Delagrange P."/>
            <person name="Prevot V."/>
            <person name="Hermine O."/>
            <person name="Prunier C."/>
            <person name="Jockers R."/>
        </authorList>
    </citation>
    <scope>FUNCTION</scope>
    <scope>INTERACTION WITH TGFBR1</scope>
    <scope>SUBCELLULAR LOCATION</scope>
    <scope>INDUCTION BY TGFB</scope>
</reference>
<gene>
    <name type="primary">Gpr50</name>
</gene>
<sequence>MATVPKSNMGPTKAVPTPFGCIGCKLPKPDYPPALIIFMFCAMVITVVVDLIGNSMVILAVTKNKKLRNSGNIFVASLSVADMLVAIYPYPLMLYAMSVGGWDLSQLQCQMVGLVTGLSVVGSIFNITAIAINRYCYICHSLQYKRIFSLRNTCIYLVVTWVMTVLAVLPNMYIGTIEYDPRTYTCIFNYVNNPAFTVTIVCIHFVLPLIIVGYCYTKIWIKVLAARDPAGQNPDNQFAEVRNFLTMFVIFLLFAVCWCPVNVLTVLVAVIPKEMAGKIPNWLYLAAYCIAYFNSCLNAIIYGILNESFRREYWTIFHAMRHPILFISHLISDIRETWETRALTRARVRARDQVREQERARACVAVEGTPRNVRNVLLPGDASAPHSDRASVRPKPQTRSTSVYRKPASIHHKSISGHPKSASVYPKPASSVHCKPASVHFKPASVHFKGDSVYFKGDTVHYRAASKLVTSHRISAGPSTSHPTSMAGYIKSGTSHPATTTVDYLEPATTSHSVLTAVDLPEVSASHCLEMTSTGHLRADISASVLPSVPFELAATPPDTTAIPIASGDYRKVVLIDDDSDDSDCSDEMAV</sequence>
<feature type="chain" id="PRO_0000069879" description="Melatonin-related receptor">
    <location>
        <begin position="1"/>
        <end position="591"/>
    </location>
</feature>
<feature type="topological domain" description="Extracellular" evidence="2">
    <location>
        <begin position="1"/>
        <end position="38"/>
    </location>
</feature>
<feature type="transmembrane region" description="Helical; Name=1" evidence="2">
    <location>
        <begin position="39"/>
        <end position="59"/>
    </location>
</feature>
<feature type="topological domain" description="Cytoplasmic" evidence="2">
    <location>
        <begin position="60"/>
        <end position="72"/>
    </location>
</feature>
<feature type="transmembrane region" description="Helical; Name=2" evidence="2">
    <location>
        <begin position="73"/>
        <end position="93"/>
    </location>
</feature>
<feature type="topological domain" description="Extracellular" evidence="2">
    <location>
        <begin position="94"/>
        <end position="111"/>
    </location>
</feature>
<feature type="transmembrane region" description="Helical; Name=3" evidence="2">
    <location>
        <begin position="112"/>
        <end position="132"/>
    </location>
</feature>
<feature type="topological domain" description="Cytoplasmic" evidence="2">
    <location>
        <begin position="133"/>
        <end position="151"/>
    </location>
</feature>
<feature type="transmembrane region" description="Helical; Name=4" evidence="2">
    <location>
        <begin position="152"/>
        <end position="172"/>
    </location>
</feature>
<feature type="topological domain" description="Extracellular" evidence="2">
    <location>
        <begin position="173"/>
        <end position="196"/>
    </location>
</feature>
<feature type="transmembrane region" description="Helical; Name=5" evidence="2">
    <location>
        <begin position="197"/>
        <end position="217"/>
    </location>
</feature>
<feature type="topological domain" description="Cytoplasmic" evidence="2">
    <location>
        <begin position="218"/>
        <end position="247"/>
    </location>
</feature>
<feature type="transmembrane region" description="Helical; Name=6" evidence="2">
    <location>
        <begin position="248"/>
        <end position="268"/>
    </location>
</feature>
<feature type="topological domain" description="Extracellular" evidence="2">
    <location>
        <begin position="269"/>
        <end position="281"/>
    </location>
</feature>
<feature type="transmembrane region" description="Helical; Name=7" evidence="2">
    <location>
        <begin position="282"/>
        <end position="302"/>
    </location>
</feature>
<feature type="topological domain" description="Cytoplasmic" evidence="2">
    <location>
        <begin position="303"/>
        <end position="591"/>
    </location>
</feature>
<feature type="region of interest" description="Disordered" evidence="4">
    <location>
        <begin position="378"/>
        <end position="427"/>
    </location>
</feature>
<feature type="disulfide bond" evidence="3">
    <location>
        <begin position="109"/>
        <end position="186"/>
    </location>
</feature>
<organism>
    <name type="scientific">Mus musculus</name>
    <name type="common">Mouse</name>
    <dbReference type="NCBI Taxonomy" id="10090"/>
    <lineage>
        <taxon>Eukaryota</taxon>
        <taxon>Metazoa</taxon>
        <taxon>Chordata</taxon>
        <taxon>Craniata</taxon>
        <taxon>Vertebrata</taxon>
        <taxon>Euteleostomi</taxon>
        <taxon>Mammalia</taxon>
        <taxon>Eutheria</taxon>
        <taxon>Euarchontoglires</taxon>
        <taxon>Glires</taxon>
        <taxon>Rodentia</taxon>
        <taxon>Myomorpha</taxon>
        <taxon>Muroidea</taxon>
        <taxon>Muridae</taxon>
        <taxon>Murinae</taxon>
        <taxon>Mus</taxon>
        <taxon>Mus</taxon>
    </lineage>
</organism>
<comment type="function">
    <text evidence="5 6 7 8 9">G protein-coupled receptor that plays a role in numerous physiological processes including regulation of energy metabolism, neurite outgrowth or cell migration (PubMed:17957037, PubMed:19699797). Promotes self-renewal and neuronal differentiation of neural progenitor cells through activation of the NOTCH and WNT/beta-catenin signaling pathways (PubMed:25689717). Modulates the KAT5-dependent glucocorticoid receptor signaling by modulating KAT5 subcellular compartmentalisation (PubMed:21858214). Also plays a role in the activation TGFBR1 in the absence of TGFBR2 by interfering with FKBP1A binding to TGFBR1, leading to induction of both canonical and non-canonical SMAD signaling pathways resulting in inhibition of proliferation or promotion of migration (PubMed:29572483).</text>
</comment>
<comment type="subunit">
    <text evidence="1 7 9">Homodimer, and heterodimer with MTNR1A and MTNR1B. Interacts with KAT5 (PubMed:21858214). Interacts with RTN4 isoform A/NOGO-A (By similarity). Interacts with TGFBR1 (PubMed:29572483).</text>
</comment>
<comment type="interaction">
    <interactant intactId="EBI-21227860">
        <id>O88495</id>
    </interactant>
    <interactant intactId="EBI-1169948">
        <id>Q8CHK4</id>
        <label>Kat5</label>
    </interactant>
    <organismsDiffer>false</organismsDiffer>
    <experiments>3</experiments>
</comment>
<comment type="subcellular location">
    <subcellularLocation>
        <location evidence="6 9">Cell membrane</location>
        <topology>Multi-pass membrane protein</topology>
    </subcellularLocation>
    <subcellularLocation>
        <location evidence="6">Postsynaptic density</location>
    </subcellularLocation>
</comment>
<comment type="tissue specificity">
    <text evidence="5 6">Strongly expressed in the brain with highly restricted pattern of expression, confined to a subset of the ependymal cells of the third ventricle and a population of cells in the dorsomedial hypothalamic nucleus.</text>
</comment>
<comment type="induction">
    <text evidence="6 9">Expression in the brain is highly responsive to energy status being decreased by both fasting and high fat diet feeding (PubMed:19699797). Induced by TGFB (PubMed:29572483).</text>
</comment>
<comment type="disruption phenotype">
    <text evidence="5 7">GPR50-deletion mice exhibit significantly lower body weights in the weeks following weaning and by 10 weeks of age are significantly lighter than wild type mice. This is due in part by an increased metabolic rate (PubMed:17957037). In addition, glucocorticoid receptor signaling is significantly diminished in mice lacking GPR50 (PubMed:21858214).</text>
</comment>
<comment type="similarity">
    <text evidence="3">Belongs to the G-protein coupled receptor 1 family.</text>
</comment>
<comment type="caution">
    <text evidence="10">It is uncertain whether Met-1 or Met-9 is the initiator.</text>
</comment>
<protein>
    <recommendedName>
        <fullName>Melatonin-related receptor</fullName>
    </recommendedName>
    <alternativeName>
        <fullName>G protein-coupled receptor 50</fullName>
    </alternativeName>
    <alternativeName>
        <fullName>H9</fullName>
    </alternativeName>
</protein>
<keyword id="KW-1003">Cell membrane</keyword>
<keyword id="KW-1015">Disulfide bond</keyword>
<keyword id="KW-0297">G-protein coupled receptor</keyword>
<keyword id="KW-0472">Membrane</keyword>
<keyword id="KW-0675">Receptor</keyword>
<keyword id="KW-1185">Reference proteome</keyword>
<keyword id="KW-0770">Synapse</keyword>
<keyword id="KW-0807">Transducer</keyword>
<keyword id="KW-0812">Transmembrane</keyword>
<keyword id="KW-1133">Transmembrane helix</keyword>
<dbReference type="EMBL" id="AF065145">
    <property type="protein sequence ID" value="AAC21462.1"/>
    <property type="molecule type" value="mRNA"/>
</dbReference>
<dbReference type="EMBL" id="AK132272">
    <property type="protein sequence ID" value="BAE21072.1"/>
    <property type="molecule type" value="mRNA"/>
</dbReference>
<dbReference type="EMBL" id="AL840624">
    <property type="status" value="NOT_ANNOTATED_CDS"/>
    <property type="molecule type" value="Genomic_DNA"/>
</dbReference>
<dbReference type="EMBL" id="CH466624">
    <property type="protein sequence ID" value="EDL26572.1"/>
    <property type="molecule type" value="Genomic_DNA"/>
</dbReference>
<dbReference type="EMBL" id="BC137982">
    <property type="protein sequence ID" value="AAI37983.1"/>
    <property type="molecule type" value="mRNA"/>
</dbReference>
<dbReference type="CCDS" id="CCDS30181.1"/>
<dbReference type="RefSeq" id="NP_001295430.1">
    <property type="nucleotide sequence ID" value="NM_001308501.1"/>
</dbReference>
<dbReference type="RefSeq" id="NP_034470.1">
    <property type="nucleotide sequence ID" value="NM_010340.2"/>
</dbReference>
<dbReference type="SMR" id="O88495"/>
<dbReference type="CORUM" id="O88495"/>
<dbReference type="FunCoup" id="O88495">
    <property type="interactions" value="490"/>
</dbReference>
<dbReference type="IntAct" id="O88495">
    <property type="interactions" value="8"/>
</dbReference>
<dbReference type="STRING" id="10090.ENSMUSP00000064608"/>
<dbReference type="GlyGen" id="O88495">
    <property type="glycosylation" value="1 site, 1 O-linked glycan (1 site)"/>
</dbReference>
<dbReference type="iPTMnet" id="O88495"/>
<dbReference type="PhosphoSitePlus" id="O88495"/>
<dbReference type="PaxDb" id="10090-ENSMUSP00000064608"/>
<dbReference type="PeptideAtlas" id="O88495"/>
<dbReference type="ProteomicsDB" id="291367"/>
<dbReference type="Antibodypedia" id="7082">
    <property type="antibodies" value="296 antibodies from 35 providers"/>
</dbReference>
<dbReference type="DNASU" id="14765"/>
<dbReference type="Ensembl" id="ENSMUST00000070449.6">
    <property type="protein sequence ID" value="ENSMUSP00000064608.6"/>
    <property type="gene ID" value="ENSMUSG00000056380.14"/>
</dbReference>
<dbReference type="GeneID" id="14765"/>
<dbReference type="KEGG" id="mmu:14765"/>
<dbReference type="UCSC" id="uc009tke.1">
    <property type="organism name" value="mouse"/>
</dbReference>
<dbReference type="AGR" id="MGI:1333877"/>
<dbReference type="CTD" id="9248"/>
<dbReference type="MGI" id="MGI:1333877">
    <property type="gene designation" value="Gpr50"/>
</dbReference>
<dbReference type="VEuPathDB" id="HostDB:ENSMUSG00000056380"/>
<dbReference type="eggNOG" id="KOG3656">
    <property type="taxonomic scope" value="Eukaryota"/>
</dbReference>
<dbReference type="GeneTree" id="ENSGT00940000160515"/>
<dbReference type="HOGENOM" id="CLU_468199_0_0_1"/>
<dbReference type="InParanoid" id="O88495"/>
<dbReference type="OMA" id="VGFCYMR"/>
<dbReference type="OrthoDB" id="10044919at2759"/>
<dbReference type="PhylomeDB" id="O88495"/>
<dbReference type="TreeFam" id="TF331693"/>
<dbReference type="BioGRID-ORCS" id="14765">
    <property type="hits" value="1 hit in 79 CRISPR screens"/>
</dbReference>
<dbReference type="PRO" id="PR:O88495"/>
<dbReference type="Proteomes" id="UP000000589">
    <property type="component" value="Chromosome X"/>
</dbReference>
<dbReference type="RNAct" id="O88495">
    <property type="molecule type" value="protein"/>
</dbReference>
<dbReference type="Bgee" id="ENSMUSG00000056380">
    <property type="expression patterns" value="Expressed in median eminence of neurohypophysis and 81 other cell types or tissues"/>
</dbReference>
<dbReference type="GO" id="GO:0005654">
    <property type="term" value="C:nucleoplasm"/>
    <property type="evidence" value="ECO:0007669"/>
    <property type="project" value="Ensembl"/>
</dbReference>
<dbReference type="GO" id="GO:0005886">
    <property type="term" value="C:plasma membrane"/>
    <property type="evidence" value="ECO:0007669"/>
    <property type="project" value="UniProtKB-SubCell"/>
</dbReference>
<dbReference type="GO" id="GO:0014069">
    <property type="term" value="C:postsynaptic density"/>
    <property type="evidence" value="ECO:0007669"/>
    <property type="project" value="UniProtKB-SubCell"/>
</dbReference>
<dbReference type="GO" id="GO:0008502">
    <property type="term" value="F:melatonin receptor activity"/>
    <property type="evidence" value="ECO:0007669"/>
    <property type="project" value="InterPro"/>
</dbReference>
<dbReference type="FunFam" id="1.20.1070.10:FF:000172">
    <property type="entry name" value="G protein-coupled receptor 50"/>
    <property type="match status" value="1"/>
</dbReference>
<dbReference type="Gene3D" id="1.20.1070.10">
    <property type="entry name" value="Rhodopsin 7-helix transmembrane proteins"/>
    <property type="match status" value="1"/>
</dbReference>
<dbReference type="InterPro" id="IPR000276">
    <property type="entry name" value="GPCR_Rhodpsn"/>
</dbReference>
<dbReference type="InterPro" id="IPR017452">
    <property type="entry name" value="GPCR_Rhodpsn_7TM"/>
</dbReference>
<dbReference type="InterPro" id="IPR002280">
    <property type="entry name" value="Mel_rcpt_1X"/>
</dbReference>
<dbReference type="InterPro" id="IPR000025">
    <property type="entry name" value="Melatonin_rcpt"/>
</dbReference>
<dbReference type="PANTHER" id="PTHR24228">
    <property type="entry name" value="B2 BRADYKININ RECEPTOR/ANGIOTENSIN II RECEPTOR"/>
    <property type="match status" value="1"/>
</dbReference>
<dbReference type="PANTHER" id="PTHR24228:SF56">
    <property type="entry name" value="MELATONIN-RELATED RECEPTOR"/>
    <property type="match status" value="1"/>
</dbReference>
<dbReference type="Pfam" id="PF00001">
    <property type="entry name" value="7tm_1"/>
    <property type="match status" value="1"/>
</dbReference>
<dbReference type="PRINTS" id="PR00237">
    <property type="entry name" value="GPCRRHODOPSN"/>
</dbReference>
<dbReference type="PRINTS" id="PR01151">
    <property type="entry name" value="MELATONIN1XR"/>
</dbReference>
<dbReference type="PRINTS" id="PR00857">
    <property type="entry name" value="MELATONINR"/>
</dbReference>
<dbReference type="SMART" id="SM01381">
    <property type="entry name" value="7TM_GPCR_Srsx"/>
    <property type="match status" value="1"/>
</dbReference>
<dbReference type="SUPFAM" id="SSF81321">
    <property type="entry name" value="Family A G protein-coupled receptor-like"/>
    <property type="match status" value="1"/>
</dbReference>
<dbReference type="PROSITE" id="PS00237">
    <property type="entry name" value="G_PROTEIN_RECEP_F1_1"/>
    <property type="match status" value="1"/>
</dbReference>
<dbReference type="PROSITE" id="PS50262">
    <property type="entry name" value="G_PROTEIN_RECEP_F1_2"/>
    <property type="match status" value="1"/>
</dbReference>